<protein>
    <recommendedName>
        <fullName evidence="2">Adaptive-response sensory kinase SasA</fullName>
        <ecNumber evidence="2">2.7.13.3</ecNumber>
    </recommendedName>
    <alternativeName>
        <fullName evidence="6">Sensor histidine kinase Hik8</fullName>
    </alternativeName>
    <alternativeName>
        <fullName evidence="2 7">Sensor histidine kinase SasA</fullName>
    </alternativeName>
</protein>
<proteinExistence type="evidence at protein level"/>
<dbReference type="EC" id="2.7.13.3" evidence="2"/>
<dbReference type="EMBL" id="BA000022">
    <property type="protein sequence ID" value="BAA10143.1"/>
    <property type="molecule type" value="Genomic_DNA"/>
</dbReference>
<dbReference type="PIR" id="S76291">
    <property type="entry name" value="S76291"/>
</dbReference>
<dbReference type="SMR" id="Q55630"/>
<dbReference type="IntAct" id="Q55630">
    <property type="interactions" value="9"/>
</dbReference>
<dbReference type="STRING" id="1148.gene:10499636"/>
<dbReference type="PaxDb" id="1148-1001516"/>
<dbReference type="EnsemblBacteria" id="BAA10143">
    <property type="protein sequence ID" value="BAA10143"/>
    <property type="gene ID" value="BAA10143"/>
</dbReference>
<dbReference type="KEGG" id="syn:sll0750"/>
<dbReference type="eggNOG" id="COG2205">
    <property type="taxonomic scope" value="Bacteria"/>
</dbReference>
<dbReference type="InParanoid" id="Q55630"/>
<dbReference type="PhylomeDB" id="Q55630"/>
<dbReference type="Proteomes" id="UP000001425">
    <property type="component" value="Chromosome"/>
</dbReference>
<dbReference type="GO" id="GO:0005524">
    <property type="term" value="F:ATP binding"/>
    <property type="evidence" value="ECO:0007669"/>
    <property type="project" value="UniProtKB-KW"/>
</dbReference>
<dbReference type="GO" id="GO:0000155">
    <property type="term" value="F:phosphorelay sensor kinase activity"/>
    <property type="evidence" value="ECO:0007669"/>
    <property type="project" value="InterPro"/>
</dbReference>
<dbReference type="GO" id="GO:0097167">
    <property type="term" value="P:circadian regulation of translation"/>
    <property type="evidence" value="ECO:0000315"/>
    <property type="project" value="UniProtKB"/>
</dbReference>
<dbReference type="GO" id="GO:0007623">
    <property type="term" value="P:circadian rhythm"/>
    <property type="evidence" value="ECO:0000315"/>
    <property type="project" value="UniProtKB"/>
</dbReference>
<dbReference type="CDD" id="cd00075">
    <property type="entry name" value="HATPase"/>
    <property type="match status" value="1"/>
</dbReference>
<dbReference type="CDD" id="cd00082">
    <property type="entry name" value="HisKA"/>
    <property type="match status" value="1"/>
</dbReference>
<dbReference type="CDD" id="cd02978">
    <property type="entry name" value="KaiB_like"/>
    <property type="match status" value="1"/>
</dbReference>
<dbReference type="FunFam" id="1.10.287.130:FF:000154">
    <property type="entry name" value="Adaptive-response sensory kinase"/>
    <property type="match status" value="1"/>
</dbReference>
<dbReference type="FunFam" id="3.40.30.10:FF:000673">
    <property type="entry name" value="Adaptive-response sensory-kinase SasA"/>
    <property type="match status" value="1"/>
</dbReference>
<dbReference type="FunFam" id="3.30.565.10:FF:000006">
    <property type="entry name" value="Sensor histidine kinase WalK"/>
    <property type="match status" value="1"/>
</dbReference>
<dbReference type="Gene3D" id="1.10.287.130">
    <property type="match status" value="1"/>
</dbReference>
<dbReference type="Gene3D" id="3.40.30.10">
    <property type="entry name" value="Glutaredoxin"/>
    <property type="match status" value="1"/>
</dbReference>
<dbReference type="Gene3D" id="3.30.565.10">
    <property type="entry name" value="Histidine kinase-like ATPase, C-terminal domain"/>
    <property type="match status" value="1"/>
</dbReference>
<dbReference type="HAMAP" id="MF_01837">
    <property type="entry name" value="Kinase_SasA"/>
    <property type="match status" value="1"/>
</dbReference>
<dbReference type="InterPro" id="IPR036890">
    <property type="entry name" value="HATPase_C_sf"/>
</dbReference>
<dbReference type="InterPro" id="IPR005467">
    <property type="entry name" value="His_kinase_dom"/>
</dbReference>
<dbReference type="InterPro" id="IPR003661">
    <property type="entry name" value="HisK_dim/P_dom"/>
</dbReference>
<dbReference type="InterPro" id="IPR036097">
    <property type="entry name" value="HisK_dim/P_sf"/>
</dbReference>
<dbReference type="InterPro" id="IPR011649">
    <property type="entry name" value="KaiB_domain"/>
</dbReference>
<dbReference type="InterPro" id="IPR023527">
    <property type="entry name" value="Kinase_SasA"/>
</dbReference>
<dbReference type="InterPro" id="IPR050736">
    <property type="entry name" value="Sensor_HK_Regulatory"/>
</dbReference>
<dbReference type="InterPro" id="IPR004358">
    <property type="entry name" value="Sig_transdc_His_kin-like_C"/>
</dbReference>
<dbReference type="InterPro" id="IPR036249">
    <property type="entry name" value="Thioredoxin-like_sf"/>
</dbReference>
<dbReference type="NCBIfam" id="NF006800">
    <property type="entry name" value="PRK09303.1"/>
    <property type="match status" value="1"/>
</dbReference>
<dbReference type="PANTHER" id="PTHR43711:SF26">
    <property type="entry name" value="SENSOR HISTIDINE KINASE RCSC"/>
    <property type="match status" value="1"/>
</dbReference>
<dbReference type="PANTHER" id="PTHR43711">
    <property type="entry name" value="TWO-COMPONENT HISTIDINE KINASE"/>
    <property type="match status" value="1"/>
</dbReference>
<dbReference type="Pfam" id="PF02518">
    <property type="entry name" value="HATPase_c"/>
    <property type="match status" value="1"/>
</dbReference>
<dbReference type="Pfam" id="PF00512">
    <property type="entry name" value="HisKA"/>
    <property type="match status" value="1"/>
</dbReference>
<dbReference type="Pfam" id="PF07689">
    <property type="entry name" value="KaiB"/>
    <property type="match status" value="1"/>
</dbReference>
<dbReference type="PRINTS" id="PR00344">
    <property type="entry name" value="BCTRLSENSOR"/>
</dbReference>
<dbReference type="SMART" id="SM00387">
    <property type="entry name" value="HATPase_c"/>
    <property type="match status" value="1"/>
</dbReference>
<dbReference type="SMART" id="SM00388">
    <property type="entry name" value="HisKA"/>
    <property type="match status" value="1"/>
</dbReference>
<dbReference type="SMART" id="SM01248">
    <property type="entry name" value="KaiB"/>
    <property type="match status" value="1"/>
</dbReference>
<dbReference type="SUPFAM" id="SSF55874">
    <property type="entry name" value="ATPase domain of HSP90 chaperone/DNA topoisomerase II/histidine kinase"/>
    <property type="match status" value="1"/>
</dbReference>
<dbReference type="SUPFAM" id="SSF47384">
    <property type="entry name" value="Homodimeric domain of signal transducing histidine kinase"/>
    <property type="match status" value="1"/>
</dbReference>
<dbReference type="SUPFAM" id="SSF52833">
    <property type="entry name" value="Thioredoxin-like"/>
    <property type="match status" value="1"/>
</dbReference>
<dbReference type="PROSITE" id="PS50109">
    <property type="entry name" value="HIS_KIN"/>
    <property type="match status" value="1"/>
</dbReference>
<accession>Q55630</accession>
<keyword id="KW-0067">ATP-binding</keyword>
<keyword id="KW-0090">Biological rhythms</keyword>
<keyword id="KW-0418">Kinase</keyword>
<keyword id="KW-0547">Nucleotide-binding</keyword>
<keyword id="KW-0597">Phosphoprotein</keyword>
<keyword id="KW-1185">Reference proteome</keyword>
<keyword id="KW-0808">Transferase</keyword>
<keyword id="KW-0902">Two-component regulatory system</keyword>
<comment type="function">
    <text evidence="2">Member of the two-component regulatory system SasA/RpaA involved in genome-wide circadian gene expression. One of several clock output pathways. Participates in the Kai clock protein complex, the main circadian regulator in cyanobacteria, via its interaction with KaiC. KaiC enhances the autophosphorylation activity of SasA, which then transfers its phosphate group to RpaA to activate it. In addition to its output function, recruits fold-shifted KaiB (KaiB(fs)) to KaiC to cooperatively form the KaiB(6):KaiC(6) complex (independent of SasA kinase activity). Required for robustness of the circadian rhythm of gene expression and is involved in clock output, also required for adaptation to light/dark cycles.</text>
</comment>
<comment type="function">
    <text evidence="3 4">Plays an important role in glucose metabolism, important for expression of genes involved in glycolysis, gluconeogenesis, the oxidative pentose phosphate pathway, and glycogen metabolism. Required for heterotrophic growth (PubMed:15774880). Overexpression from the psbAII promoter leads to altered levels of genes involved in carbon metabolism, increased levels of transcripts for clock oscillator genes in the light and the dark, complete loss of glycogen accumulation, decreased levels of metabolites of sugar catabolism and increased levels of amino acids in the light and increased levels of SigE protein (PubMed:25403325).</text>
</comment>
<comment type="catalytic activity">
    <reaction evidence="2">
        <text>ATP + protein L-histidine = ADP + protein N-phospho-L-histidine.</text>
        <dbReference type="EC" id="2.7.13.3"/>
    </reaction>
</comment>
<comment type="subunit">
    <text evidence="1 4 5">Homooligomerizes (By similarity). Interacts with KaiC1 (PubMed:25403325, PubMed:30216574). Interacts with KaiC1 and RpaA (PubMed:30216574). Binds to the B-loop in the CI domain of KaiC; SasA and KaiB compete to bind to the CI domain (By similarity).</text>
</comment>
<comment type="induction">
    <text evidence="4">Expressed at the same levels in light and dark (at protein level).</text>
</comment>
<comment type="domain">
    <text evidence="2">The N-terminus interacts with KaiC, while the C-terminal histidine kinase domain autophosphorylates and is probably responsible for self-oligomerization. The N-terminal domain stimulates the C-terminus to autophosphorylate.</text>
</comment>
<comment type="disruption phenotype">
    <text evidence="3">Deficiency in glucose utilization and/or glucose intolerance in the absence of light; no longer grows if less than 6/24 hours of light is furnished during mixotrophic (MT) growth on glucose, no heterotrophic growth (in complete darkness). Accumulates glycogen under MT growth, but seems unable to utilize it. No expression of phytochrome or its response regulator (cph1 and rcp1).</text>
</comment>
<organism>
    <name type="scientific">Synechocystis sp. (strain ATCC 27184 / PCC 6803 / Kazusa)</name>
    <dbReference type="NCBI Taxonomy" id="1111708"/>
    <lineage>
        <taxon>Bacteria</taxon>
        <taxon>Bacillati</taxon>
        <taxon>Cyanobacteriota</taxon>
        <taxon>Cyanophyceae</taxon>
        <taxon>Synechococcales</taxon>
        <taxon>Merismopediaceae</taxon>
        <taxon>Synechocystis</taxon>
    </lineage>
</organism>
<evidence type="ECO:0000250" key="1">
    <source>
        <dbReference type="UniProtKB" id="Q8DMT2"/>
    </source>
</evidence>
<evidence type="ECO:0000255" key="2">
    <source>
        <dbReference type="HAMAP-Rule" id="MF_01837"/>
    </source>
</evidence>
<evidence type="ECO:0000269" key="3">
    <source>
    </source>
</evidence>
<evidence type="ECO:0000269" key="4">
    <source>
    </source>
</evidence>
<evidence type="ECO:0000269" key="5">
    <source>
    </source>
</evidence>
<evidence type="ECO:0000303" key="6">
    <source>
    </source>
</evidence>
<evidence type="ECO:0000303" key="7">
    <source>
    </source>
</evidence>
<evidence type="ECO:0000303" key="8">
    <source>
    </source>
</evidence>
<evidence type="ECO:0000312" key="9">
    <source>
        <dbReference type="EMBL" id="BAA10143.1"/>
    </source>
</evidence>
<sequence>MSSSSELGNASSVPLQFLLFIDDRPNSQDSVQEIGQCLTNLLDGHSHDLQILQISKHPHLVEHFRLVATPSLIKLQPEPRQVLAGSNIIQQLQKWWPRWQQELAMDPNPEDTGQSPSCPREISSVGYSGELMKMSDELFLLKKDKEELLQQIQFKDQILAMLAHDLRSPLTAASIAVDTLELLQHKPIEEQKPALRSQLLYQARKQFKIMDRLIEDILQASKNLNSQFQVHGRPLAIADLCQEVLELYQAKFSKKNLTITYDIPKDLPNVFADEELIRQVIANLLDNAIKYTPAHGSITVGALHRTTQKVQVSITDNGPGIPNSKQETIFEGHFRLQRDEQTDGYGLGLSLCRKIIQAHYGQIWVDSRPKQGSSFHFTLPVYR</sequence>
<reference evidence="9" key="1">
    <citation type="journal article" date="1995" name="DNA Res.">
        <title>Sequence analysis of the genome of the unicellular cyanobacterium Synechocystis sp. strain PCC6803. I. Sequence features in the 1 Mb region from map positions 64% to 92% of the genome.</title>
        <authorList>
            <person name="Kaneko T."/>
            <person name="Tanaka A."/>
            <person name="Sato S."/>
            <person name="Kotani H."/>
            <person name="Sazuka T."/>
            <person name="Miyajima N."/>
            <person name="Sugiura M."/>
            <person name="Tabata S."/>
        </authorList>
    </citation>
    <scope>NUCLEOTIDE SEQUENCE [LARGE SCALE GENOMIC DNA]</scope>
    <source>
        <strain>ATCC 27184 / PCC 6803 / N-1</strain>
    </source>
</reference>
<reference key="2">
    <citation type="journal article" date="1996" name="DNA Res.">
        <title>Sequence analysis of the genome of the unicellular cyanobacterium Synechocystis sp. strain PCC6803. II. Sequence determination of the entire genome and assignment of potential protein-coding regions.</title>
        <authorList>
            <person name="Kaneko T."/>
            <person name="Sato S."/>
            <person name="Kotani H."/>
            <person name="Tanaka A."/>
            <person name="Asamizu E."/>
            <person name="Nakamura Y."/>
            <person name="Miyajima N."/>
            <person name="Hirosawa M."/>
            <person name="Sugiura M."/>
            <person name="Sasamoto S."/>
            <person name="Kimura T."/>
            <person name="Hosouchi T."/>
            <person name="Matsuno A."/>
            <person name="Muraki A."/>
            <person name="Nakazaki N."/>
            <person name="Naruo K."/>
            <person name="Okumura S."/>
            <person name="Shimpo S."/>
            <person name="Takeuchi C."/>
            <person name="Wada T."/>
            <person name="Watanabe A."/>
            <person name="Yamada M."/>
            <person name="Yasuda M."/>
            <person name="Tabata S."/>
        </authorList>
    </citation>
    <scope>NUCLEOTIDE SEQUENCE [LARGE SCALE GENOMIC DNA]</scope>
    <source>
        <strain>ATCC 27184 / PCC 6803 / Kazusa</strain>
    </source>
</reference>
<reference key="3">
    <citation type="journal article" date="2005" name="J. Bacteriol.">
        <title>Pleiotropic effect of a histidine kinase on carbohydrate metabolism in Synechocystis sp. strain PCC 6803 and its requirement for heterotrophic growth.</title>
        <authorList>
            <person name="Singh A.K."/>
            <person name="Sherman L.A."/>
        </authorList>
    </citation>
    <scope>FUNCTION</scope>
    <scope>REGULON</scope>
    <scope>DISRUPTION PHENOTYPE</scope>
    <source>
        <strain>ATCC 27184 / PCC 6803 / Kazusa</strain>
    </source>
</reference>
<reference key="4">
    <citation type="journal article" date="2015" name="Environ. Microbiol.">
        <title>Alteration of cyanobacterial sugar and amino acid metabolism by overexpression hik8, encoding a KaiC-associated histidine kinase.</title>
        <authorList>
            <person name="Osanai T."/>
            <person name="Shirai T."/>
            <person name="Iijima H."/>
            <person name="Kuwahara A."/>
            <person name="Suzuki I."/>
            <person name="Kondo A."/>
            <person name="Hirai M.Y."/>
        </authorList>
    </citation>
    <scope>OVEREXPRESSION</scope>
    <scope>FUNCTION</scope>
    <scope>INTERACTION WITH KAIC1</scope>
    <scope>INDUCTION</scope>
    <source>
        <strain>ATCC 27184 / PCC 6803 / Kazusa</strain>
    </source>
</reference>
<reference key="5">
    <citation type="journal article" date="2018" name="Mol. Microbiol.">
        <title>The role of the Synechocystis sp. PCC 6803 homolog of the circadian clock output regulator RpaA in day-night transitions.</title>
        <authorList>
            <person name="Koebler C."/>
            <person name="Schultz S.J."/>
            <person name="Kopp D."/>
            <person name="Voigt K."/>
            <person name="Wilde A."/>
        </authorList>
    </citation>
    <scope>INTERACTION WITH KAIC1 AND RPAA</scope>
    <source>
        <strain>ATCC 27184 / PCC 6803 / Kazusa</strain>
    </source>
</reference>
<feature type="chain" id="PRO_0000074874" description="Adaptive-response sensory kinase SasA">
    <location>
        <begin position="1"/>
        <end position="383"/>
    </location>
</feature>
<feature type="domain" description="Histidine kinase" evidence="2">
    <location>
        <begin position="161"/>
        <end position="383"/>
    </location>
</feature>
<feature type="modified residue" description="Phosphohistidine; by autocatalysis" evidence="2">
    <location>
        <position position="164"/>
    </location>
</feature>
<name>SASA_SYNY3</name>
<gene>
    <name evidence="2" type="primary">sasA</name>
    <name evidence="6" type="synonym">hik8</name>
    <name evidence="8" type="synonym">sarA</name>
    <name type="ordered locus">sll0750</name>
</gene>